<evidence type="ECO:0000255" key="1">
    <source>
        <dbReference type="HAMAP-Rule" id="MF_01367"/>
    </source>
</evidence>
<evidence type="ECO:0000305" key="2"/>
<gene>
    <name evidence="1" type="primary">rplN</name>
    <name type="ordered locus">AnaeK_1943</name>
</gene>
<reference key="1">
    <citation type="submission" date="2008-08" db="EMBL/GenBank/DDBJ databases">
        <title>Complete sequence of Anaeromyxobacter sp. K.</title>
        <authorList>
            <consortium name="US DOE Joint Genome Institute"/>
            <person name="Lucas S."/>
            <person name="Copeland A."/>
            <person name="Lapidus A."/>
            <person name="Glavina del Rio T."/>
            <person name="Dalin E."/>
            <person name="Tice H."/>
            <person name="Bruce D."/>
            <person name="Goodwin L."/>
            <person name="Pitluck S."/>
            <person name="Saunders E."/>
            <person name="Brettin T."/>
            <person name="Detter J.C."/>
            <person name="Han C."/>
            <person name="Larimer F."/>
            <person name="Land M."/>
            <person name="Hauser L."/>
            <person name="Kyrpides N."/>
            <person name="Ovchinnikiva G."/>
            <person name="Beliaev A."/>
        </authorList>
    </citation>
    <scope>NUCLEOTIDE SEQUENCE [LARGE SCALE GENOMIC DNA]</scope>
    <source>
        <strain>K</strain>
    </source>
</reference>
<feature type="chain" id="PRO_1000144217" description="Large ribosomal subunit protein uL14">
    <location>
        <begin position="1"/>
        <end position="122"/>
    </location>
</feature>
<keyword id="KW-0687">Ribonucleoprotein</keyword>
<keyword id="KW-0689">Ribosomal protein</keyword>
<keyword id="KW-0694">RNA-binding</keyword>
<keyword id="KW-0699">rRNA-binding</keyword>
<dbReference type="EMBL" id="CP001131">
    <property type="protein sequence ID" value="ACG73171.1"/>
    <property type="molecule type" value="Genomic_DNA"/>
</dbReference>
<dbReference type="RefSeq" id="WP_011420990.1">
    <property type="nucleotide sequence ID" value="NC_011145.1"/>
</dbReference>
<dbReference type="SMR" id="B4UBA9"/>
<dbReference type="KEGG" id="ank:AnaeK_1943"/>
<dbReference type="HOGENOM" id="CLU_095071_2_1_7"/>
<dbReference type="OrthoDB" id="9806379at2"/>
<dbReference type="Proteomes" id="UP000001871">
    <property type="component" value="Chromosome"/>
</dbReference>
<dbReference type="GO" id="GO:0022625">
    <property type="term" value="C:cytosolic large ribosomal subunit"/>
    <property type="evidence" value="ECO:0007669"/>
    <property type="project" value="TreeGrafter"/>
</dbReference>
<dbReference type="GO" id="GO:0070180">
    <property type="term" value="F:large ribosomal subunit rRNA binding"/>
    <property type="evidence" value="ECO:0007669"/>
    <property type="project" value="TreeGrafter"/>
</dbReference>
<dbReference type="GO" id="GO:0003735">
    <property type="term" value="F:structural constituent of ribosome"/>
    <property type="evidence" value="ECO:0007669"/>
    <property type="project" value="InterPro"/>
</dbReference>
<dbReference type="GO" id="GO:0006412">
    <property type="term" value="P:translation"/>
    <property type="evidence" value="ECO:0007669"/>
    <property type="project" value="UniProtKB-UniRule"/>
</dbReference>
<dbReference type="CDD" id="cd00337">
    <property type="entry name" value="Ribosomal_uL14"/>
    <property type="match status" value="1"/>
</dbReference>
<dbReference type="FunFam" id="2.40.150.20:FF:000001">
    <property type="entry name" value="50S ribosomal protein L14"/>
    <property type="match status" value="1"/>
</dbReference>
<dbReference type="Gene3D" id="2.40.150.20">
    <property type="entry name" value="Ribosomal protein L14"/>
    <property type="match status" value="1"/>
</dbReference>
<dbReference type="HAMAP" id="MF_01367">
    <property type="entry name" value="Ribosomal_uL14"/>
    <property type="match status" value="1"/>
</dbReference>
<dbReference type="InterPro" id="IPR000218">
    <property type="entry name" value="Ribosomal_uL14"/>
</dbReference>
<dbReference type="InterPro" id="IPR005745">
    <property type="entry name" value="Ribosomal_uL14_bac-type"/>
</dbReference>
<dbReference type="InterPro" id="IPR019972">
    <property type="entry name" value="Ribosomal_uL14_CS"/>
</dbReference>
<dbReference type="InterPro" id="IPR036853">
    <property type="entry name" value="Ribosomal_uL14_sf"/>
</dbReference>
<dbReference type="NCBIfam" id="TIGR01067">
    <property type="entry name" value="rplN_bact"/>
    <property type="match status" value="1"/>
</dbReference>
<dbReference type="PANTHER" id="PTHR11761">
    <property type="entry name" value="50S/60S RIBOSOMAL PROTEIN L14/L23"/>
    <property type="match status" value="1"/>
</dbReference>
<dbReference type="PANTHER" id="PTHR11761:SF3">
    <property type="entry name" value="LARGE RIBOSOMAL SUBUNIT PROTEIN UL14M"/>
    <property type="match status" value="1"/>
</dbReference>
<dbReference type="Pfam" id="PF00238">
    <property type="entry name" value="Ribosomal_L14"/>
    <property type="match status" value="1"/>
</dbReference>
<dbReference type="SMART" id="SM01374">
    <property type="entry name" value="Ribosomal_L14"/>
    <property type="match status" value="1"/>
</dbReference>
<dbReference type="SUPFAM" id="SSF50193">
    <property type="entry name" value="Ribosomal protein L14"/>
    <property type="match status" value="1"/>
</dbReference>
<dbReference type="PROSITE" id="PS00049">
    <property type="entry name" value="RIBOSOMAL_L14"/>
    <property type="match status" value="1"/>
</dbReference>
<sequence>MIQQQTMLDVADNSGAKRVMCIKVLGGTRRKYASIGDVIVVSIKEAIPQAKVKKGEVARAVIVRTAREVKRPDGSYIRFDGNSAVLINKDLEPIGTRIFGPVARELRARKFMKIISLAPEVL</sequence>
<name>RL14_ANASK</name>
<organism>
    <name type="scientific">Anaeromyxobacter sp. (strain K)</name>
    <dbReference type="NCBI Taxonomy" id="447217"/>
    <lineage>
        <taxon>Bacteria</taxon>
        <taxon>Pseudomonadati</taxon>
        <taxon>Myxococcota</taxon>
        <taxon>Myxococcia</taxon>
        <taxon>Myxococcales</taxon>
        <taxon>Cystobacterineae</taxon>
        <taxon>Anaeromyxobacteraceae</taxon>
        <taxon>Anaeromyxobacter</taxon>
    </lineage>
</organism>
<protein>
    <recommendedName>
        <fullName evidence="1">Large ribosomal subunit protein uL14</fullName>
    </recommendedName>
    <alternativeName>
        <fullName evidence="2">50S ribosomal protein L14</fullName>
    </alternativeName>
</protein>
<accession>B4UBA9</accession>
<proteinExistence type="inferred from homology"/>
<comment type="function">
    <text evidence="1">Binds to 23S rRNA. Forms part of two intersubunit bridges in the 70S ribosome.</text>
</comment>
<comment type="subunit">
    <text evidence="1">Part of the 50S ribosomal subunit. Forms a cluster with proteins L3 and L19. In the 70S ribosome, L14 and L19 interact and together make contacts with the 16S rRNA in bridges B5 and B8.</text>
</comment>
<comment type="similarity">
    <text evidence="1">Belongs to the universal ribosomal protein uL14 family.</text>
</comment>